<dbReference type="EMBL" id="CP000668">
    <property type="protein sequence ID" value="ABP40354.1"/>
    <property type="molecule type" value="Genomic_DNA"/>
</dbReference>
<dbReference type="RefSeq" id="WP_002210286.1">
    <property type="nucleotide sequence ID" value="NZ_CP009715.1"/>
</dbReference>
<dbReference type="SMR" id="A4TM42"/>
<dbReference type="KEGG" id="ypp:YPDSF_1971"/>
<dbReference type="PATRIC" id="fig|386656.14.peg.3438"/>
<dbReference type="Gene3D" id="1.10.287.680">
    <property type="entry name" value="Helix hairpin bin"/>
    <property type="match status" value="1"/>
</dbReference>
<dbReference type="Gene3D" id="1.10.3190.10">
    <property type="entry name" value="yfbu gene product, domain 2"/>
    <property type="match status" value="1"/>
</dbReference>
<dbReference type="HAMAP" id="MF_00762">
    <property type="entry name" value="UPF0304"/>
    <property type="match status" value="1"/>
</dbReference>
<dbReference type="InterPro" id="IPR005587">
    <property type="entry name" value="UPF0304_YfbU"/>
</dbReference>
<dbReference type="InterPro" id="IPR023146">
    <property type="entry name" value="YfbU_alpha-helical_sf"/>
</dbReference>
<dbReference type="InterPro" id="IPR023145">
    <property type="entry name" value="YfbU_helix-hairpin_sf"/>
</dbReference>
<dbReference type="NCBIfam" id="NF003936">
    <property type="entry name" value="PRK05445.1"/>
    <property type="match status" value="1"/>
</dbReference>
<dbReference type="Pfam" id="PF03887">
    <property type="entry name" value="YfbU"/>
    <property type="match status" value="1"/>
</dbReference>
<dbReference type="PIRSF" id="PIRSF006272">
    <property type="entry name" value="UCP006272"/>
    <property type="match status" value="1"/>
</dbReference>
<dbReference type="SUPFAM" id="SSF116960">
    <property type="entry name" value="YfbU-like"/>
    <property type="match status" value="1"/>
</dbReference>
<protein>
    <recommendedName>
        <fullName evidence="1">UPF0304 protein YPDSF_1971</fullName>
    </recommendedName>
</protein>
<organism>
    <name type="scientific">Yersinia pestis (strain Pestoides F)</name>
    <dbReference type="NCBI Taxonomy" id="386656"/>
    <lineage>
        <taxon>Bacteria</taxon>
        <taxon>Pseudomonadati</taxon>
        <taxon>Pseudomonadota</taxon>
        <taxon>Gammaproteobacteria</taxon>
        <taxon>Enterobacterales</taxon>
        <taxon>Yersiniaceae</taxon>
        <taxon>Yersinia</taxon>
    </lineage>
</organism>
<evidence type="ECO:0000255" key="1">
    <source>
        <dbReference type="HAMAP-Rule" id="MF_00762"/>
    </source>
</evidence>
<feature type="chain" id="PRO_1000046772" description="UPF0304 protein YPDSF_1971">
    <location>
        <begin position="1"/>
        <end position="164"/>
    </location>
</feature>
<gene>
    <name type="ordered locus">YPDSF_1971</name>
</gene>
<proteinExistence type="inferred from homology"/>
<comment type="similarity">
    <text evidence="1">Belongs to the UPF0304 family.</text>
</comment>
<reference key="1">
    <citation type="submission" date="2007-02" db="EMBL/GenBank/DDBJ databases">
        <title>Complete sequence of chromosome of Yersinia pestis Pestoides F.</title>
        <authorList>
            <consortium name="US DOE Joint Genome Institute"/>
            <person name="Copeland A."/>
            <person name="Lucas S."/>
            <person name="Lapidus A."/>
            <person name="Barry K."/>
            <person name="Detter J.C."/>
            <person name="Glavina del Rio T."/>
            <person name="Hammon N."/>
            <person name="Israni S."/>
            <person name="Dalin E."/>
            <person name="Tice H."/>
            <person name="Pitluck S."/>
            <person name="Di Bartolo G."/>
            <person name="Chain P."/>
            <person name="Malfatti S."/>
            <person name="Shin M."/>
            <person name="Vergez L."/>
            <person name="Schmutz J."/>
            <person name="Larimer F."/>
            <person name="Land M."/>
            <person name="Hauser L."/>
            <person name="Worsham P."/>
            <person name="Chu M."/>
            <person name="Bearden S."/>
            <person name="Garcia E."/>
            <person name="Richardson P."/>
        </authorList>
    </citation>
    <scope>NUCLEOTIDE SEQUENCE [LARGE SCALE GENOMIC DNA]</scope>
    <source>
        <strain>Pestoides F</strain>
    </source>
</reference>
<accession>A4TM42</accession>
<sequence length="164" mass="19492">MDMTNAQRLILSNQYKMMTMLDPENAERYRRQQTIVERGFGLQMRELDRDFGEMSEDTCRTIINIMEMHHALQVSWGNLKEKQDLDERRISFLGFDAATESRYLSYVRFMVNTEGRYTHFDSGTHGFNSQTPMWDKYQRMLAIWQSCPRQYHLSAVEISQIINA</sequence>
<name>Y1971_YERPP</name>